<reference key="1">
    <citation type="journal article" date="2009" name="PLoS Genet.">
        <title>The complete genome and proteome of Laribacter hongkongensis reveal potential mechanisms for adaptations to different temperatures and habitats.</title>
        <authorList>
            <person name="Woo P.C.Y."/>
            <person name="Lau S.K.P."/>
            <person name="Tse H."/>
            <person name="Teng J.L.L."/>
            <person name="Curreem S.O."/>
            <person name="Tsang A.K.L."/>
            <person name="Fan R.Y.Y."/>
            <person name="Wong G.K.M."/>
            <person name="Huang Y."/>
            <person name="Loman N.J."/>
            <person name="Snyder L.A.S."/>
            <person name="Cai J.J."/>
            <person name="Huang J.-D."/>
            <person name="Mak W."/>
            <person name="Pallen M.J."/>
            <person name="Lok S."/>
            <person name="Yuen K.-Y."/>
        </authorList>
    </citation>
    <scope>NUCLEOTIDE SEQUENCE [LARGE SCALE GENOMIC DNA]</scope>
    <source>
        <strain>HLHK9</strain>
    </source>
</reference>
<evidence type="ECO:0000255" key="1">
    <source>
        <dbReference type="HAMAP-Rule" id="MF_00766"/>
    </source>
</evidence>
<accession>C1D8R6</accession>
<dbReference type="EC" id="2.4.99.28" evidence="1"/>
<dbReference type="EMBL" id="CP001154">
    <property type="protein sequence ID" value="ACO74856.1"/>
    <property type="molecule type" value="Genomic_DNA"/>
</dbReference>
<dbReference type="RefSeq" id="WP_012697342.1">
    <property type="nucleotide sequence ID" value="NC_012559.1"/>
</dbReference>
<dbReference type="SMR" id="C1D8R6"/>
<dbReference type="STRING" id="557598.LHK_01872"/>
<dbReference type="CAZy" id="GT51">
    <property type="family name" value="Glycosyltransferase Family 51"/>
</dbReference>
<dbReference type="KEGG" id="lhk:LHK_01872"/>
<dbReference type="eggNOG" id="COG0744">
    <property type="taxonomic scope" value="Bacteria"/>
</dbReference>
<dbReference type="HOGENOM" id="CLU_006354_1_0_4"/>
<dbReference type="UniPathway" id="UPA00219"/>
<dbReference type="Proteomes" id="UP000002010">
    <property type="component" value="Chromosome"/>
</dbReference>
<dbReference type="GO" id="GO:0009274">
    <property type="term" value="C:peptidoglycan-based cell wall"/>
    <property type="evidence" value="ECO:0007669"/>
    <property type="project" value="InterPro"/>
</dbReference>
<dbReference type="GO" id="GO:0005886">
    <property type="term" value="C:plasma membrane"/>
    <property type="evidence" value="ECO:0007669"/>
    <property type="project" value="UniProtKB-SubCell"/>
</dbReference>
<dbReference type="GO" id="GO:0016763">
    <property type="term" value="F:pentosyltransferase activity"/>
    <property type="evidence" value="ECO:0007669"/>
    <property type="project" value="InterPro"/>
</dbReference>
<dbReference type="GO" id="GO:0008955">
    <property type="term" value="F:peptidoglycan glycosyltransferase activity"/>
    <property type="evidence" value="ECO:0007669"/>
    <property type="project" value="UniProtKB-UniRule"/>
</dbReference>
<dbReference type="GO" id="GO:0071555">
    <property type="term" value="P:cell wall organization"/>
    <property type="evidence" value="ECO:0007669"/>
    <property type="project" value="UniProtKB-KW"/>
</dbReference>
<dbReference type="GO" id="GO:0009252">
    <property type="term" value="P:peptidoglycan biosynthetic process"/>
    <property type="evidence" value="ECO:0007669"/>
    <property type="project" value="UniProtKB-UniRule"/>
</dbReference>
<dbReference type="GO" id="GO:0008360">
    <property type="term" value="P:regulation of cell shape"/>
    <property type="evidence" value="ECO:0007669"/>
    <property type="project" value="UniProtKB-KW"/>
</dbReference>
<dbReference type="Gene3D" id="1.10.3810.10">
    <property type="entry name" value="Biosynthetic peptidoglycan transglycosylase-like"/>
    <property type="match status" value="1"/>
</dbReference>
<dbReference type="HAMAP" id="MF_00766">
    <property type="entry name" value="PGT_MtgA"/>
    <property type="match status" value="1"/>
</dbReference>
<dbReference type="InterPro" id="IPR001264">
    <property type="entry name" value="Glyco_trans_51"/>
</dbReference>
<dbReference type="InterPro" id="IPR023346">
    <property type="entry name" value="Lysozyme-like_dom_sf"/>
</dbReference>
<dbReference type="InterPro" id="IPR036950">
    <property type="entry name" value="PBP_transglycosylase"/>
</dbReference>
<dbReference type="InterPro" id="IPR011812">
    <property type="entry name" value="Pep_trsgly"/>
</dbReference>
<dbReference type="NCBIfam" id="TIGR02070">
    <property type="entry name" value="mono_pep_trsgly"/>
    <property type="match status" value="1"/>
</dbReference>
<dbReference type="PANTHER" id="PTHR30400:SF0">
    <property type="entry name" value="BIOSYNTHETIC PEPTIDOGLYCAN TRANSGLYCOSYLASE"/>
    <property type="match status" value="1"/>
</dbReference>
<dbReference type="PANTHER" id="PTHR30400">
    <property type="entry name" value="MONOFUNCTIONAL BIOSYNTHETIC PEPTIDOGLYCAN TRANSGLYCOSYLASE"/>
    <property type="match status" value="1"/>
</dbReference>
<dbReference type="Pfam" id="PF00912">
    <property type="entry name" value="Transgly"/>
    <property type="match status" value="1"/>
</dbReference>
<dbReference type="SUPFAM" id="SSF53955">
    <property type="entry name" value="Lysozyme-like"/>
    <property type="match status" value="1"/>
</dbReference>
<gene>
    <name evidence="1" type="primary">mtgA</name>
    <name type="ordered locus">LHK_01872</name>
</gene>
<keyword id="KW-0997">Cell inner membrane</keyword>
<keyword id="KW-1003">Cell membrane</keyword>
<keyword id="KW-0133">Cell shape</keyword>
<keyword id="KW-0961">Cell wall biogenesis/degradation</keyword>
<keyword id="KW-0328">Glycosyltransferase</keyword>
<keyword id="KW-0472">Membrane</keyword>
<keyword id="KW-0573">Peptidoglycan synthesis</keyword>
<keyword id="KW-1185">Reference proteome</keyword>
<keyword id="KW-0808">Transferase</keyword>
<keyword id="KW-0812">Transmembrane</keyword>
<keyword id="KW-1133">Transmembrane helix</keyword>
<proteinExistence type="inferred from homology"/>
<organism>
    <name type="scientific">Laribacter hongkongensis (strain HLHK9)</name>
    <dbReference type="NCBI Taxonomy" id="557598"/>
    <lineage>
        <taxon>Bacteria</taxon>
        <taxon>Pseudomonadati</taxon>
        <taxon>Pseudomonadota</taxon>
        <taxon>Betaproteobacteria</taxon>
        <taxon>Neisseriales</taxon>
        <taxon>Aquaspirillaceae</taxon>
        <taxon>Laribacter</taxon>
    </lineage>
</organism>
<protein>
    <recommendedName>
        <fullName evidence="1">Biosynthetic peptidoglycan transglycosylase</fullName>
        <ecNumber evidence="1">2.4.99.28</ecNumber>
    </recommendedName>
    <alternativeName>
        <fullName evidence="1">Glycan polymerase</fullName>
    </alternativeName>
    <alternativeName>
        <fullName evidence="1">Peptidoglycan glycosyltransferase MtgA</fullName>
        <shortName evidence="1">PGT</shortName>
    </alternativeName>
</protein>
<comment type="function">
    <text evidence="1">Peptidoglycan polymerase that catalyzes glycan chain elongation from lipid-linked precursors.</text>
</comment>
<comment type="catalytic activity">
    <reaction evidence="1">
        <text>[GlcNAc-(1-&gt;4)-Mur2Ac(oyl-L-Ala-gamma-D-Glu-L-Lys-D-Ala-D-Ala)](n)-di-trans,octa-cis-undecaprenyl diphosphate + beta-D-GlcNAc-(1-&gt;4)-Mur2Ac(oyl-L-Ala-gamma-D-Glu-L-Lys-D-Ala-D-Ala)-di-trans,octa-cis-undecaprenyl diphosphate = [GlcNAc-(1-&gt;4)-Mur2Ac(oyl-L-Ala-gamma-D-Glu-L-Lys-D-Ala-D-Ala)](n+1)-di-trans,octa-cis-undecaprenyl diphosphate + di-trans,octa-cis-undecaprenyl diphosphate + H(+)</text>
        <dbReference type="Rhea" id="RHEA:23708"/>
        <dbReference type="Rhea" id="RHEA-COMP:9602"/>
        <dbReference type="Rhea" id="RHEA-COMP:9603"/>
        <dbReference type="ChEBI" id="CHEBI:15378"/>
        <dbReference type="ChEBI" id="CHEBI:58405"/>
        <dbReference type="ChEBI" id="CHEBI:60033"/>
        <dbReference type="ChEBI" id="CHEBI:78435"/>
        <dbReference type="EC" id="2.4.99.28"/>
    </reaction>
</comment>
<comment type="pathway">
    <text evidence="1">Cell wall biogenesis; peptidoglycan biosynthesis.</text>
</comment>
<comment type="subcellular location">
    <subcellularLocation>
        <location evidence="1">Cell inner membrane</location>
        <topology evidence="1">Single-pass membrane protein</topology>
    </subcellularLocation>
</comment>
<comment type="similarity">
    <text evidence="1">Belongs to the glycosyltransferase 51 family.</text>
</comment>
<name>MTGA_LARHH</name>
<feature type="chain" id="PRO_1000148436" description="Biosynthetic peptidoglycan transglycosylase">
    <location>
        <begin position="1"/>
        <end position="228"/>
    </location>
</feature>
<feature type="transmembrane region" description="Helical" evidence="1">
    <location>
        <begin position="8"/>
        <end position="28"/>
    </location>
</feature>
<sequence length="228" mass="26443">MLKWIVRGVAALLALFLLYQLWIFGHIVYWKWNNPATTAFMDEQQARLAETNPDAELRYRWVDYGRISPQLKRAIVASEDAKFLQHEGFDWEGIQTAWEKNLQKGRIVAGGSTISQQLAKNLFLSSRRTPWRKAEEALITVMLEAVMDKRRIFEIYLNVIEWGDGVFGAESAARHYYRVPASRLSAGQAAKLAAMVPNPRYYDTHRNDRTLLRKTKIIQRRMNFVAIP</sequence>